<dbReference type="EC" id="2.8.1.8" evidence="1"/>
<dbReference type="EMBL" id="GG657461">
    <property type="protein sequence ID" value="OAT10945.1"/>
    <property type="molecule type" value="Genomic_DNA"/>
</dbReference>
<dbReference type="RefSeq" id="XP_002623274.1">
    <property type="nucleotide sequence ID" value="XM_002623228.2"/>
</dbReference>
<dbReference type="SMR" id="C5JVC1"/>
<dbReference type="STRING" id="559298.C5JVC1"/>
<dbReference type="GeneID" id="8503147"/>
<dbReference type="KEGG" id="bgh:BDBG_06713"/>
<dbReference type="VEuPathDB" id="FungiDB:BDBG_06713"/>
<dbReference type="HOGENOM" id="CLU_033144_0_1_1"/>
<dbReference type="OrthoDB" id="3231at2759"/>
<dbReference type="UniPathway" id="UPA00538">
    <property type="reaction ID" value="UER00593"/>
</dbReference>
<dbReference type="Proteomes" id="UP000002038">
    <property type="component" value="Unassembled WGS sequence"/>
</dbReference>
<dbReference type="GO" id="GO:0005739">
    <property type="term" value="C:mitochondrion"/>
    <property type="evidence" value="ECO:0007669"/>
    <property type="project" value="UniProtKB-SubCell"/>
</dbReference>
<dbReference type="GO" id="GO:0051539">
    <property type="term" value="F:4 iron, 4 sulfur cluster binding"/>
    <property type="evidence" value="ECO:0007669"/>
    <property type="project" value="UniProtKB-UniRule"/>
</dbReference>
<dbReference type="GO" id="GO:0016992">
    <property type="term" value="F:lipoate synthase activity"/>
    <property type="evidence" value="ECO:0007669"/>
    <property type="project" value="UniProtKB-UniRule"/>
</dbReference>
<dbReference type="GO" id="GO:0046872">
    <property type="term" value="F:metal ion binding"/>
    <property type="evidence" value="ECO:0007669"/>
    <property type="project" value="UniProtKB-KW"/>
</dbReference>
<dbReference type="CDD" id="cd01335">
    <property type="entry name" value="Radical_SAM"/>
    <property type="match status" value="1"/>
</dbReference>
<dbReference type="FunFam" id="3.20.20.70:FF:000036">
    <property type="entry name" value="Lipoyl synthase, mitochondrial"/>
    <property type="match status" value="1"/>
</dbReference>
<dbReference type="Gene3D" id="3.20.20.70">
    <property type="entry name" value="Aldolase class I"/>
    <property type="match status" value="1"/>
</dbReference>
<dbReference type="HAMAP" id="MF_00206">
    <property type="entry name" value="Lipoyl_synth"/>
    <property type="match status" value="1"/>
</dbReference>
<dbReference type="InterPro" id="IPR013785">
    <property type="entry name" value="Aldolase_TIM"/>
</dbReference>
<dbReference type="InterPro" id="IPR006638">
    <property type="entry name" value="Elp3/MiaA/NifB-like_rSAM"/>
</dbReference>
<dbReference type="InterPro" id="IPR031691">
    <property type="entry name" value="LIAS_N"/>
</dbReference>
<dbReference type="InterPro" id="IPR003698">
    <property type="entry name" value="Lipoyl_synth"/>
</dbReference>
<dbReference type="InterPro" id="IPR007197">
    <property type="entry name" value="rSAM"/>
</dbReference>
<dbReference type="NCBIfam" id="TIGR00510">
    <property type="entry name" value="lipA"/>
    <property type="match status" value="1"/>
</dbReference>
<dbReference type="NCBIfam" id="NF004019">
    <property type="entry name" value="PRK05481.1"/>
    <property type="match status" value="1"/>
</dbReference>
<dbReference type="NCBIfam" id="NF009544">
    <property type="entry name" value="PRK12928.1"/>
    <property type="match status" value="1"/>
</dbReference>
<dbReference type="PANTHER" id="PTHR10949">
    <property type="entry name" value="LIPOYL SYNTHASE"/>
    <property type="match status" value="1"/>
</dbReference>
<dbReference type="PANTHER" id="PTHR10949:SF0">
    <property type="entry name" value="LIPOYL SYNTHASE, MITOCHONDRIAL"/>
    <property type="match status" value="1"/>
</dbReference>
<dbReference type="Pfam" id="PF16881">
    <property type="entry name" value="LIAS_N"/>
    <property type="match status" value="1"/>
</dbReference>
<dbReference type="Pfam" id="PF04055">
    <property type="entry name" value="Radical_SAM"/>
    <property type="match status" value="1"/>
</dbReference>
<dbReference type="SFLD" id="SFLDF00271">
    <property type="entry name" value="lipoyl_synthase"/>
    <property type="match status" value="1"/>
</dbReference>
<dbReference type="SFLD" id="SFLDS00029">
    <property type="entry name" value="Radical_SAM"/>
    <property type="match status" value="1"/>
</dbReference>
<dbReference type="SMART" id="SM00729">
    <property type="entry name" value="Elp3"/>
    <property type="match status" value="1"/>
</dbReference>
<dbReference type="SUPFAM" id="SSF102114">
    <property type="entry name" value="Radical SAM enzymes"/>
    <property type="match status" value="1"/>
</dbReference>
<dbReference type="PROSITE" id="PS51918">
    <property type="entry name" value="RADICAL_SAM"/>
    <property type="match status" value="1"/>
</dbReference>
<proteinExistence type="inferred from homology"/>
<name>LIPA_BLAGS</name>
<feature type="transit peptide" description="Mitochondrion" evidence="1">
    <location>
        <begin position="1"/>
        <end position="37"/>
    </location>
</feature>
<feature type="chain" id="PRO_0000398249" description="Lipoyl synthase, mitochondrial">
    <location>
        <begin position="38"/>
        <end position="430"/>
    </location>
</feature>
<feature type="domain" description="Radical SAM core" evidence="2">
    <location>
        <begin position="155"/>
        <end position="376"/>
    </location>
</feature>
<feature type="region of interest" description="Disordered" evidence="3">
    <location>
        <begin position="40"/>
        <end position="64"/>
    </location>
</feature>
<feature type="compositionally biased region" description="Low complexity" evidence="3">
    <location>
        <begin position="40"/>
        <end position="56"/>
    </location>
</feature>
<feature type="binding site" evidence="1">
    <location>
        <position position="141"/>
    </location>
    <ligand>
        <name>[4Fe-4S] cluster</name>
        <dbReference type="ChEBI" id="CHEBI:49883"/>
        <label>1</label>
    </ligand>
</feature>
<feature type="binding site" evidence="1">
    <location>
        <position position="146"/>
    </location>
    <ligand>
        <name>[4Fe-4S] cluster</name>
        <dbReference type="ChEBI" id="CHEBI:49883"/>
        <label>1</label>
    </ligand>
</feature>
<feature type="binding site" evidence="1">
    <location>
        <position position="152"/>
    </location>
    <ligand>
        <name>[4Fe-4S] cluster</name>
        <dbReference type="ChEBI" id="CHEBI:49883"/>
        <label>1</label>
    </ligand>
</feature>
<feature type="binding site" evidence="1">
    <location>
        <position position="172"/>
    </location>
    <ligand>
        <name>[4Fe-4S] cluster</name>
        <dbReference type="ChEBI" id="CHEBI:49883"/>
        <label>2</label>
        <note>4Fe-4S-S-AdoMet</note>
    </ligand>
</feature>
<feature type="binding site" evidence="1">
    <location>
        <position position="176"/>
    </location>
    <ligand>
        <name>[4Fe-4S] cluster</name>
        <dbReference type="ChEBI" id="CHEBI:49883"/>
        <label>2</label>
        <note>4Fe-4S-S-AdoMet</note>
    </ligand>
</feature>
<feature type="binding site" evidence="1">
    <location>
        <position position="179"/>
    </location>
    <ligand>
        <name>[4Fe-4S] cluster</name>
        <dbReference type="ChEBI" id="CHEBI:49883"/>
        <label>2</label>
        <note>4Fe-4S-S-AdoMet</note>
    </ligand>
</feature>
<feature type="binding site" evidence="1">
    <location>
        <position position="387"/>
    </location>
    <ligand>
        <name>[4Fe-4S] cluster</name>
        <dbReference type="ChEBI" id="CHEBI:49883"/>
        <label>1</label>
    </ligand>
</feature>
<sequence>MAASTGKLRTLFSAHSSLSARPSSALPALRLTILRSYATTTPPDSSISNPSNPSTTVKRPPTAFKDKLNAGPAFSDFVSGKKDEPLDPAEAYALKTALVGPAGRKKEITRLPSWLKTPIPDSSNYKRIKNDLRGLNLHTVCEEARCPNISDCWGGSSKSAATATIMLMGDTCTRGCRFCSVKTSNKPPPLDPHEPENTAEALSRWGLGYVVLTSVDRDDLADGGARHFAETVLKIKQKAPNILVECLTGDYAGDLEMVALVANSGLDVYAHNVETVEALTPFVRDRRATFQQSLRVLKAAKATKPELITKTSLMLGLGETEAQLWDTLRALRAIDVDVVTFGQYMRPTKRHMAVHEYVRPDVFDMWKERALEMGFLYCASGPLVRSSYKAGEAFIENVLKKKRGKNVGSASGKGTTSENVEKLVAGEAVR</sequence>
<comment type="function">
    <text evidence="1">Catalyzes the radical-mediated insertion of two sulfur atoms into the C-6 and C-8 positions of the octanoyl moiety bound to the lipoyl domains of lipoate-dependent enzymes, thereby converting the octanoylated domains into lipoylated derivatives.</text>
</comment>
<comment type="catalytic activity">
    <reaction evidence="1">
        <text>[[Fe-S] cluster scaffold protein carrying a second [4Fe-4S](2+) cluster] + N(6)-octanoyl-L-lysyl-[protein] + 2 oxidized [2Fe-2S]-[ferredoxin] + 2 S-adenosyl-L-methionine + 4 H(+) = [[Fe-S] cluster scaffold protein] + N(6)-[(R)-dihydrolipoyl]-L-lysyl-[protein] + 4 Fe(3+) + 2 hydrogen sulfide + 2 5'-deoxyadenosine + 2 L-methionine + 2 reduced [2Fe-2S]-[ferredoxin]</text>
        <dbReference type="Rhea" id="RHEA:16585"/>
        <dbReference type="Rhea" id="RHEA-COMP:9928"/>
        <dbReference type="Rhea" id="RHEA-COMP:10000"/>
        <dbReference type="Rhea" id="RHEA-COMP:10001"/>
        <dbReference type="Rhea" id="RHEA-COMP:10475"/>
        <dbReference type="Rhea" id="RHEA-COMP:14568"/>
        <dbReference type="Rhea" id="RHEA-COMP:14569"/>
        <dbReference type="ChEBI" id="CHEBI:15378"/>
        <dbReference type="ChEBI" id="CHEBI:17319"/>
        <dbReference type="ChEBI" id="CHEBI:29034"/>
        <dbReference type="ChEBI" id="CHEBI:29919"/>
        <dbReference type="ChEBI" id="CHEBI:33722"/>
        <dbReference type="ChEBI" id="CHEBI:33737"/>
        <dbReference type="ChEBI" id="CHEBI:33738"/>
        <dbReference type="ChEBI" id="CHEBI:57844"/>
        <dbReference type="ChEBI" id="CHEBI:59789"/>
        <dbReference type="ChEBI" id="CHEBI:78809"/>
        <dbReference type="ChEBI" id="CHEBI:83100"/>
        <dbReference type="EC" id="2.8.1.8"/>
    </reaction>
</comment>
<comment type="cofactor">
    <cofactor evidence="1">
        <name>[4Fe-4S] cluster</name>
        <dbReference type="ChEBI" id="CHEBI:49883"/>
    </cofactor>
    <text evidence="1">Binds 2 [4Fe-4S] clusters per subunit. One cluster is coordinated with 3 cysteines and an exchangeable S-adenosyl-L-methionine.</text>
</comment>
<comment type="pathway">
    <text evidence="1">Protein modification; protein lipoylation via endogenous pathway; protein N(6)-(lipoyl)lysine from octanoyl-[acyl-carrier-protein]: step 2/2.</text>
</comment>
<comment type="subcellular location">
    <subcellularLocation>
        <location evidence="1">Mitochondrion</location>
    </subcellularLocation>
</comment>
<comment type="similarity">
    <text evidence="1">Belongs to the radical SAM superfamily. Lipoyl synthase family.</text>
</comment>
<organism>
    <name type="scientific">Blastomyces gilchristii (strain SLH14081)</name>
    <name type="common">Blastomyces dermatitidis</name>
    <dbReference type="NCBI Taxonomy" id="559298"/>
    <lineage>
        <taxon>Eukaryota</taxon>
        <taxon>Fungi</taxon>
        <taxon>Dikarya</taxon>
        <taxon>Ascomycota</taxon>
        <taxon>Pezizomycotina</taxon>
        <taxon>Eurotiomycetes</taxon>
        <taxon>Eurotiomycetidae</taxon>
        <taxon>Onygenales</taxon>
        <taxon>Ajellomycetaceae</taxon>
        <taxon>Blastomyces</taxon>
    </lineage>
</organism>
<reference key="1">
    <citation type="journal article" date="2015" name="PLoS Genet.">
        <title>The dynamic genome and transcriptome of the human fungal pathogen Blastomyces and close relative Emmonsia.</title>
        <authorList>
            <person name="Munoz J.F."/>
            <person name="Gauthier G.M."/>
            <person name="Desjardins C.A."/>
            <person name="Gallo J.E."/>
            <person name="Holder J."/>
            <person name="Sullivan T.D."/>
            <person name="Marty A.J."/>
            <person name="Carmen J.C."/>
            <person name="Chen Z."/>
            <person name="Ding L."/>
            <person name="Gujja S."/>
            <person name="Magrini V."/>
            <person name="Misas E."/>
            <person name="Mitreva M."/>
            <person name="Priest M."/>
            <person name="Saif S."/>
            <person name="Whiston E.A."/>
            <person name="Young S."/>
            <person name="Zeng Q."/>
            <person name="Goldman W.E."/>
            <person name="Mardis E.R."/>
            <person name="Taylor J.W."/>
            <person name="McEwen J.G."/>
            <person name="Clay O.K."/>
            <person name="Klein B.S."/>
            <person name="Cuomo C.A."/>
        </authorList>
    </citation>
    <scope>NUCLEOTIDE SEQUENCE [LARGE SCALE GENOMIC DNA]</scope>
    <source>
        <strain>SLH14081</strain>
    </source>
</reference>
<keyword id="KW-0004">4Fe-4S</keyword>
<keyword id="KW-0408">Iron</keyword>
<keyword id="KW-0411">Iron-sulfur</keyword>
<keyword id="KW-0479">Metal-binding</keyword>
<keyword id="KW-0496">Mitochondrion</keyword>
<keyword id="KW-1185">Reference proteome</keyword>
<keyword id="KW-0949">S-adenosyl-L-methionine</keyword>
<keyword id="KW-0808">Transferase</keyword>
<keyword id="KW-0809">Transit peptide</keyword>
<evidence type="ECO:0000255" key="1">
    <source>
        <dbReference type="HAMAP-Rule" id="MF_03123"/>
    </source>
</evidence>
<evidence type="ECO:0000255" key="2">
    <source>
        <dbReference type="PROSITE-ProRule" id="PRU01266"/>
    </source>
</evidence>
<evidence type="ECO:0000256" key="3">
    <source>
        <dbReference type="SAM" id="MobiDB-lite"/>
    </source>
</evidence>
<protein>
    <recommendedName>
        <fullName evidence="1">Lipoyl synthase, mitochondrial</fullName>
        <ecNumber evidence="1">2.8.1.8</ecNumber>
    </recommendedName>
    <alternativeName>
        <fullName evidence="1">Lipoate synthase</fullName>
        <shortName evidence="1">LS</shortName>
        <shortName evidence="1">Lip-syn</shortName>
    </alternativeName>
    <alternativeName>
        <fullName evidence="1">Lipoic acid synthase</fullName>
    </alternativeName>
</protein>
<gene>
    <name type="ORF">BDBG_06713</name>
</gene>
<accession>C5JVC1</accession>
<accession>A0A179US54</accession>